<gene>
    <name type="ordered locus">MW1653</name>
</gene>
<accession>Q7A0N0</accession>
<keyword id="KW-0963">Cytoplasm</keyword>
<feature type="chain" id="PRO_0000288894" description="Putative universal stress protein MW1653">
    <location>
        <begin position="1"/>
        <end position="166"/>
    </location>
</feature>
<dbReference type="EMBL" id="BA000033">
    <property type="protein sequence ID" value="BAB95518.1"/>
    <property type="molecule type" value="Genomic_DNA"/>
</dbReference>
<dbReference type="RefSeq" id="WP_000634175.1">
    <property type="nucleotide sequence ID" value="NC_003923.1"/>
</dbReference>
<dbReference type="SMR" id="Q7A0N0"/>
<dbReference type="KEGG" id="sam:MW1653"/>
<dbReference type="HOGENOM" id="CLU_049301_16_0_9"/>
<dbReference type="GO" id="GO:0005737">
    <property type="term" value="C:cytoplasm"/>
    <property type="evidence" value="ECO:0007669"/>
    <property type="project" value="UniProtKB-SubCell"/>
</dbReference>
<dbReference type="CDD" id="cd00293">
    <property type="entry name" value="USP-like"/>
    <property type="match status" value="1"/>
</dbReference>
<dbReference type="Gene3D" id="3.40.50.620">
    <property type="entry name" value="HUPs"/>
    <property type="match status" value="1"/>
</dbReference>
<dbReference type="InterPro" id="IPR014729">
    <property type="entry name" value="Rossmann-like_a/b/a_fold"/>
</dbReference>
<dbReference type="InterPro" id="IPR006015">
    <property type="entry name" value="Universal_stress_UspA"/>
</dbReference>
<dbReference type="InterPro" id="IPR006016">
    <property type="entry name" value="UspA"/>
</dbReference>
<dbReference type="PANTHER" id="PTHR46268">
    <property type="entry name" value="STRESS RESPONSE PROTEIN NHAX"/>
    <property type="match status" value="1"/>
</dbReference>
<dbReference type="PANTHER" id="PTHR46268:SF6">
    <property type="entry name" value="UNIVERSAL STRESS PROTEIN UP12"/>
    <property type="match status" value="1"/>
</dbReference>
<dbReference type="Pfam" id="PF00582">
    <property type="entry name" value="Usp"/>
    <property type="match status" value="1"/>
</dbReference>
<dbReference type="PIRSF" id="PIRSF006276">
    <property type="entry name" value="UspA"/>
    <property type="match status" value="1"/>
</dbReference>
<dbReference type="PRINTS" id="PR01438">
    <property type="entry name" value="UNVRSLSTRESS"/>
</dbReference>
<dbReference type="SUPFAM" id="SSF52402">
    <property type="entry name" value="Adenine nucleotide alpha hydrolases-like"/>
    <property type="match status" value="1"/>
</dbReference>
<comment type="subcellular location">
    <subcellularLocation>
        <location evidence="1">Cytoplasm</location>
    </subcellularLocation>
</comment>
<comment type="similarity">
    <text evidence="2">Belongs to the universal stress protein A family.</text>
</comment>
<sequence>MITYKNILIAVDGSHEAEWAFNRAVGVAKRNDAKLTIVNVIDSRTYSSYEVYDAQFTEKSKHFAEELLNGYKEVATNAGVKDVETRLEFGSPKSIIPKKLAHEINADLIMSGTSGLNAVERFIVGSVSESIVRHAPCDVLVVRTEELPADFQPQVATTQLREKYQN</sequence>
<protein>
    <recommendedName>
        <fullName>Putative universal stress protein MW1653</fullName>
    </recommendedName>
</protein>
<reference key="1">
    <citation type="journal article" date="2002" name="Lancet">
        <title>Genome and virulence determinants of high virulence community-acquired MRSA.</title>
        <authorList>
            <person name="Baba T."/>
            <person name="Takeuchi F."/>
            <person name="Kuroda M."/>
            <person name="Yuzawa H."/>
            <person name="Aoki K."/>
            <person name="Oguchi A."/>
            <person name="Nagai Y."/>
            <person name="Iwama N."/>
            <person name="Asano K."/>
            <person name="Naimi T."/>
            <person name="Kuroda H."/>
            <person name="Cui L."/>
            <person name="Yamamoto K."/>
            <person name="Hiramatsu K."/>
        </authorList>
    </citation>
    <scope>NUCLEOTIDE SEQUENCE [LARGE SCALE GENOMIC DNA]</scope>
    <source>
        <strain>MW2</strain>
    </source>
</reference>
<organism>
    <name type="scientific">Staphylococcus aureus (strain MW2)</name>
    <dbReference type="NCBI Taxonomy" id="196620"/>
    <lineage>
        <taxon>Bacteria</taxon>
        <taxon>Bacillati</taxon>
        <taxon>Bacillota</taxon>
        <taxon>Bacilli</taxon>
        <taxon>Bacillales</taxon>
        <taxon>Staphylococcaceae</taxon>
        <taxon>Staphylococcus</taxon>
    </lineage>
</organism>
<evidence type="ECO:0000250" key="1"/>
<evidence type="ECO:0000305" key="2"/>
<name>Y1653_STAAW</name>
<proteinExistence type="inferred from homology"/>